<dbReference type="EMBL" id="L10328">
    <property type="protein sequence ID" value="AAA62063.1"/>
    <property type="status" value="ALT_INIT"/>
    <property type="molecule type" value="Genomic_DNA"/>
</dbReference>
<dbReference type="EMBL" id="U00096">
    <property type="protein sequence ID" value="AAC76735.2"/>
    <property type="molecule type" value="Genomic_DNA"/>
</dbReference>
<dbReference type="EMBL" id="AP009048">
    <property type="protein sequence ID" value="BAE77576.1"/>
    <property type="status" value="ALT_INIT"/>
    <property type="molecule type" value="Genomic_DNA"/>
</dbReference>
<dbReference type="PIR" id="A65174">
    <property type="entry name" value="A65174"/>
</dbReference>
<dbReference type="RefSeq" id="NP_418168.2">
    <property type="nucleotide sequence ID" value="NC_000913.3"/>
</dbReference>
<dbReference type="RefSeq" id="WP_001296581.1">
    <property type="nucleotide sequence ID" value="NZ_SSZK01000035.1"/>
</dbReference>
<dbReference type="BioGRID" id="4262170">
    <property type="interactions" value="16"/>
</dbReference>
<dbReference type="DIP" id="DIP-36040N"/>
<dbReference type="FunCoup" id="P0ADM8">
    <property type="interactions" value="49"/>
</dbReference>
<dbReference type="IntAct" id="P0ADM8">
    <property type="interactions" value="3"/>
</dbReference>
<dbReference type="STRING" id="511145.b3712"/>
<dbReference type="PaxDb" id="511145-b3712"/>
<dbReference type="EnsemblBacteria" id="AAC76735">
    <property type="protein sequence ID" value="AAC76735"/>
    <property type="gene ID" value="b3712"/>
</dbReference>
<dbReference type="GeneID" id="948226"/>
<dbReference type="KEGG" id="ecj:JW3690"/>
<dbReference type="KEGG" id="eco:b3712"/>
<dbReference type="KEGG" id="ecoc:C3026_20125"/>
<dbReference type="PATRIC" id="fig|1411691.4.peg.2989"/>
<dbReference type="EchoBASE" id="EB1673"/>
<dbReference type="eggNOG" id="COG2091">
    <property type="taxonomic scope" value="Bacteria"/>
</dbReference>
<dbReference type="HOGENOM" id="CLU_096413_0_0_6"/>
<dbReference type="InParanoid" id="P0ADM8"/>
<dbReference type="OrthoDB" id="7061431at2"/>
<dbReference type="PhylomeDB" id="P0ADM8"/>
<dbReference type="BioCyc" id="EcoCyc:EG11722-MONOMER"/>
<dbReference type="PRO" id="PR:P0ADM8"/>
<dbReference type="Proteomes" id="UP000000625">
    <property type="component" value="Chromosome"/>
</dbReference>
<dbReference type="GO" id="GO:0005829">
    <property type="term" value="C:cytosol"/>
    <property type="evidence" value="ECO:0000318"/>
    <property type="project" value="GO_Central"/>
</dbReference>
<dbReference type="GO" id="GO:0008897">
    <property type="term" value="F:holo-[acyl-carrier-protein] synthase activity"/>
    <property type="evidence" value="ECO:0000318"/>
    <property type="project" value="GO_Central"/>
</dbReference>
<dbReference type="GO" id="GO:0000287">
    <property type="term" value="F:magnesium ion binding"/>
    <property type="evidence" value="ECO:0007669"/>
    <property type="project" value="InterPro"/>
</dbReference>
<dbReference type="GO" id="GO:0019878">
    <property type="term" value="P:lysine biosynthetic process via aminoadipic acid"/>
    <property type="evidence" value="ECO:0000318"/>
    <property type="project" value="GO_Central"/>
</dbReference>
<dbReference type="Gene3D" id="3.90.470.20">
    <property type="entry name" value="4'-phosphopantetheinyl transferase domain"/>
    <property type="match status" value="1"/>
</dbReference>
<dbReference type="InterPro" id="IPR037143">
    <property type="entry name" value="4-PPantetheinyl_Trfase_dom_sf"/>
</dbReference>
<dbReference type="InterPro" id="IPR050559">
    <property type="entry name" value="P-Pant_transferase_sf"/>
</dbReference>
<dbReference type="PANTHER" id="PTHR12215:SF22">
    <property type="entry name" value="CYTOPLASMIC PROTEIN"/>
    <property type="match status" value="1"/>
</dbReference>
<dbReference type="PANTHER" id="PTHR12215">
    <property type="entry name" value="PHOSPHOPANTETHEINE TRANSFERASE"/>
    <property type="match status" value="1"/>
</dbReference>
<accession>P0ADM8</accession>
<accession>P31464</accession>
<accession>P76740</accession>
<accession>Q2M830</accession>
<organism>
    <name type="scientific">Escherichia coli (strain K12)</name>
    <dbReference type="NCBI Taxonomy" id="83333"/>
    <lineage>
        <taxon>Bacteria</taxon>
        <taxon>Pseudomonadati</taxon>
        <taxon>Pseudomonadota</taxon>
        <taxon>Gammaproteobacteria</taxon>
        <taxon>Enterobacterales</taxon>
        <taxon>Enterobacteriaceae</taxon>
        <taxon>Escherichia</taxon>
    </lineage>
</organism>
<gene>
    <name type="primary">yieE</name>
    <name type="ordered locus">b3712</name>
    <name type="ordered locus">JW3690</name>
</gene>
<proteinExistence type="predicted"/>
<protein>
    <recommendedName>
        <fullName>Uncharacterized protein YieE</fullName>
    </recommendedName>
</protein>
<feature type="chain" id="PRO_0000169636" description="Uncharacterized protein YieE">
    <location>
        <begin position="1"/>
        <end position="249"/>
    </location>
</feature>
<feature type="sequence conflict" description="In Ref. 1; AAA62063." evidence="1" ref="1">
    <original>GECGLDMELQRATRGFHSPHAPDNHTFSSNESLWISKQNDPNEARAQLITLR</original>
    <variation>VNVASIWNYSVRRAGFIAHTRPITTPFPAMNRYGSVNKTILTKRGRAHHAA</variation>
    <location>
        <begin position="97"/>
        <end position="148"/>
    </location>
</feature>
<evidence type="ECO:0000305" key="1"/>
<keyword id="KW-1185">Reference proteome</keyword>
<comment type="sequence caution" evidence="1">
    <conflict type="erroneous initiation">
        <sequence resource="EMBL-CDS" id="AAA62063"/>
    </conflict>
</comment>
<comment type="sequence caution" evidence="1">
    <conflict type="erroneous initiation">
        <sequence resource="EMBL-CDS" id="BAE77576"/>
    </conflict>
</comment>
<reference key="1">
    <citation type="journal article" date="1993" name="Genomics">
        <title>DNA sequence and analysis of 136 kilobases of the Escherichia coli genome: organizational symmetry around the origin of replication.</title>
        <authorList>
            <person name="Burland V.D."/>
            <person name="Plunkett G. III"/>
            <person name="Daniels D.L."/>
            <person name="Blattner F.R."/>
        </authorList>
    </citation>
    <scope>NUCLEOTIDE SEQUENCE [LARGE SCALE GENOMIC DNA]</scope>
    <source>
        <strain>K12 / MG1655 / ATCC 47076</strain>
    </source>
</reference>
<reference key="2">
    <citation type="journal article" date="1997" name="Science">
        <title>The complete genome sequence of Escherichia coli K-12.</title>
        <authorList>
            <person name="Blattner F.R."/>
            <person name="Plunkett G. III"/>
            <person name="Bloch C.A."/>
            <person name="Perna N.T."/>
            <person name="Burland V."/>
            <person name="Riley M."/>
            <person name="Collado-Vides J."/>
            <person name="Glasner J.D."/>
            <person name="Rode C.K."/>
            <person name="Mayhew G.F."/>
            <person name="Gregor J."/>
            <person name="Davis N.W."/>
            <person name="Kirkpatrick H.A."/>
            <person name="Goeden M.A."/>
            <person name="Rose D.J."/>
            <person name="Mau B."/>
            <person name="Shao Y."/>
        </authorList>
    </citation>
    <scope>NUCLEOTIDE SEQUENCE [LARGE SCALE GENOMIC DNA]</scope>
    <scope>SEQUENCE REVISION TO 97-148</scope>
    <source>
        <strain>K12 / MG1655 / ATCC 47076</strain>
    </source>
</reference>
<reference key="3">
    <citation type="journal article" date="2006" name="Mol. Syst. Biol.">
        <title>Highly accurate genome sequences of Escherichia coli K-12 strains MG1655 and W3110.</title>
        <authorList>
            <person name="Hayashi K."/>
            <person name="Morooka N."/>
            <person name="Yamamoto Y."/>
            <person name="Fujita K."/>
            <person name="Isono K."/>
            <person name="Choi S."/>
            <person name="Ohtsubo E."/>
            <person name="Baba T."/>
            <person name="Wanner B.L."/>
            <person name="Mori H."/>
            <person name="Horiuchi T."/>
        </authorList>
    </citation>
    <scope>NUCLEOTIDE SEQUENCE [LARGE SCALE GENOMIC DNA]</scope>
    <source>
        <strain>K12 / W3110 / ATCC 27325 / DSM 5911</strain>
    </source>
</reference>
<name>YIEE_ECOLI</name>
<sequence>MATHFARGILTEGHLISVRLPSQCHQEARNIPPHRQSRFLASRGLLAELMFMLYGIGELPEIVTLPKGKPVFSDKNLPSFSISYAGNMVGVALTTEGECGLDMELQRATRGFHSPHAPDNHTFSSNESLWISKQNDPNEARAQLITLRRSVLKLTGDVLNDDPRDLQLLPIAGRLKCAHVNHVEALCDAEDVLVWSVAVTPTIEKLSVWELDGKHGWKSLPDIHSRANNPTSRMMRFAQLSTVKAFSPN</sequence>